<protein>
    <recommendedName>
        <fullName evidence="1">Leucyl/phenylalanyl-tRNA--protein transferase</fullName>
        <ecNumber evidence="1">2.3.2.6</ecNumber>
    </recommendedName>
    <alternativeName>
        <fullName evidence="1">L/F-transferase</fullName>
    </alternativeName>
    <alternativeName>
        <fullName evidence="1">Leucyltransferase</fullName>
    </alternativeName>
    <alternativeName>
        <fullName evidence="1">Phenyalanyltransferase</fullName>
    </alternativeName>
</protein>
<reference key="1">
    <citation type="journal article" date="2005" name="DNA Res.">
        <title>Complete genome sequence of the facultative anaerobic magnetotactic bacterium Magnetospirillum sp. strain AMB-1.</title>
        <authorList>
            <person name="Matsunaga T."/>
            <person name="Okamura Y."/>
            <person name="Fukuda Y."/>
            <person name="Wahyudi A.T."/>
            <person name="Murase Y."/>
            <person name="Takeyama H."/>
        </authorList>
    </citation>
    <scope>NUCLEOTIDE SEQUENCE [LARGE SCALE GENOMIC DNA]</scope>
    <source>
        <strain>ATCC 700264 / AMB-1</strain>
    </source>
</reference>
<organism>
    <name type="scientific">Paramagnetospirillum magneticum (strain ATCC 700264 / AMB-1)</name>
    <name type="common">Magnetospirillum magneticum</name>
    <dbReference type="NCBI Taxonomy" id="342108"/>
    <lineage>
        <taxon>Bacteria</taxon>
        <taxon>Pseudomonadati</taxon>
        <taxon>Pseudomonadota</taxon>
        <taxon>Alphaproteobacteria</taxon>
        <taxon>Rhodospirillales</taxon>
        <taxon>Magnetospirillaceae</taxon>
        <taxon>Paramagnetospirillum</taxon>
    </lineage>
</organism>
<gene>
    <name evidence="1" type="primary">aat</name>
    <name type="ordered locus">amb2740</name>
</gene>
<comment type="function">
    <text evidence="1">Functions in the N-end rule pathway of protein degradation where it conjugates Leu, Phe and, less efficiently, Met from aminoacyl-tRNAs to the N-termini of proteins containing an N-terminal arginine or lysine.</text>
</comment>
<comment type="catalytic activity">
    <reaction evidence="1">
        <text>N-terminal L-lysyl-[protein] + L-leucyl-tRNA(Leu) = N-terminal L-leucyl-L-lysyl-[protein] + tRNA(Leu) + H(+)</text>
        <dbReference type="Rhea" id="RHEA:12340"/>
        <dbReference type="Rhea" id="RHEA-COMP:9613"/>
        <dbReference type="Rhea" id="RHEA-COMP:9622"/>
        <dbReference type="Rhea" id="RHEA-COMP:12670"/>
        <dbReference type="Rhea" id="RHEA-COMP:12671"/>
        <dbReference type="ChEBI" id="CHEBI:15378"/>
        <dbReference type="ChEBI" id="CHEBI:65249"/>
        <dbReference type="ChEBI" id="CHEBI:78442"/>
        <dbReference type="ChEBI" id="CHEBI:78494"/>
        <dbReference type="ChEBI" id="CHEBI:133043"/>
        <dbReference type="EC" id="2.3.2.6"/>
    </reaction>
</comment>
<comment type="catalytic activity">
    <reaction evidence="1">
        <text>N-terminal L-arginyl-[protein] + L-leucyl-tRNA(Leu) = N-terminal L-leucyl-L-arginyl-[protein] + tRNA(Leu) + H(+)</text>
        <dbReference type="Rhea" id="RHEA:50416"/>
        <dbReference type="Rhea" id="RHEA-COMP:9613"/>
        <dbReference type="Rhea" id="RHEA-COMP:9622"/>
        <dbReference type="Rhea" id="RHEA-COMP:12672"/>
        <dbReference type="Rhea" id="RHEA-COMP:12673"/>
        <dbReference type="ChEBI" id="CHEBI:15378"/>
        <dbReference type="ChEBI" id="CHEBI:64719"/>
        <dbReference type="ChEBI" id="CHEBI:78442"/>
        <dbReference type="ChEBI" id="CHEBI:78494"/>
        <dbReference type="ChEBI" id="CHEBI:133044"/>
        <dbReference type="EC" id="2.3.2.6"/>
    </reaction>
</comment>
<comment type="catalytic activity">
    <reaction evidence="1">
        <text>L-phenylalanyl-tRNA(Phe) + an N-terminal L-alpha-aminoacyl-[protein] = an N-terminal L-phenylalanyl-L-alpha-aminoacyl-[protein] + tRNA(Phe)</text>
        <dbReference type="Rhea" id="RHEA:43632"/>
        <dbReference type="Rhea" id="RHEA-COMP:9668"/>
        <dbReference type="Rhea" id="RHEA-COMP:9699"/>
        <dbReference type="Rhea" id="RHEA-COMP:10636"/>
        <dbReference type="Rhea" id="RHEA-COMP:10637"/>
        <dbReference type="ChEBI" id="CHEBI:78442"/>
        <dbReference type="ChEBI" id="CHEBI:78531"/>
        <dbReference type="ChEBI" id="CHEBI:78597"/>
        <dbReference type="ChEBI" id="CHEBI:83561"/>
        <dbReference type="EC" id="2.3.2.6"/>
    </reaction>
</comment>
<comment type="subcellular location">
    <subcellularLocation>
        <location evidence="1">Cytoplasm</location>
    </subcellularLocation>
</comment>
<comment type="similarity">
    <text evidence="1">Belongs to the L/F-transferase family.</text>
</comment>
<accession>Q2W3N1</accession>
<evidence type="ECO:0000255" key="1">
    <source>
        <dbReference type="HAMAP-Rule" id="MF_00688"/>
    </source>
</evidence>
<proteinExistence type="inferred from homology"/>
<keyword id="KW-0012">Acyltransferase</keyword>
<keyword id="KW-0963">Cytoplasm</keyword>
<keyword id="KW-0808">Transferase</keyword>
<sequence length="209" mass="23700">MRPLTADLLLRAYASGVFPMARSRDENRLYWVDPEQRGILPLEAFHVPKSLRRTLRSERFDIRCDTAFEAVMRACGEATADRPETWINEQIIRLFVELFELGLGHSVEVWQDGELVGGLYGLALGAAFFGESMFSRRTDASKVALVHLVARLRHGGFRLLDTQFVTEHLKQFGAQEISRAAYQDRLADALAETAWFDRNATVAWEVALV</sequence>
<feature type="chain" id="PRO_0000258064" description="Leucyl/phenylalanyl-tRNA--protein transferase">
    <location>
        <begin position="1"/>
        <end position="209"/>
    </location>
</feature>
<name>LFTR_PARM1</name>
<dbReference type="EC" id="2.3.2.6" evidence="1"/>
<dbReference type="EMBL" id="AP007255">
    <property type="protein sequence ID" value="BAE51544.1"/>
    <property type="molecule type" value="Genomic_DNA"/>
</dbReference>
<dbReference type="RefSeq" id="WP_011385119.1">
    <property type="nucleotide sequence ID" value="NC_007626.1"/>
</dbReference>
<dbReference type="SMR" id="Q2W3N1"/>
<dbReference type="STRING" id="342108.amb2740"/>
<dbReference type="KEGG" id="mag:amb2740"/>
<dbReference type="HOGENOM" id="CLU_075045_1_1_5"/>
<dbReference type="OrthoDB" id="9790282at2"/>
<dbReference type="Proteomes" id="UP000007058">
    <property type="component" value="Chromosome"/>
</dbReference>
<dbReference type="GO" id="GO:0005737">
    <property type="term" value="C:cytoplasm"/>
    <property type="evidence" value="ECO:0007669"/>
    <property type="project" value="UniProtKB-SubCell"/>
</dbReference>
<dbReference type="GO" id="GO:0008914">
    <property type="term" value="F:leucyl-tRNA--protein transferase activity"/>
    <property type="evidence" value="ECO:0007669"/>
    <property type="project" value="UniProtKB-UniRule"/>
</dbReference>
<dbReference type="GO" id="GO:0030163">
    <property type="term" value="P:protein catabolic process"/>
    <property type="evidence" value="ECO:0007669"/>
    <property type="project" value="UniProtKB-UniRule"/>
</dbReference>
<dbReference type="FunFam" id="3.40.630.70:FF:000001">
    <property type="entry name" value="Leucyl/phenylalanyl-tRNA--protein transferase"/>
    <property type="match status" value="1"/>
</dbReference>
<dbReference type="Gene3D" id="3.40.630.70">
    <property type="entry name" value="Leucyl/phenylalanyl-tRNA-protein transferase, C-terminal domain"/>
    <property type="match status" value="1"/>
</dbReference>
<dbReference type="HAMAP" id="MF_00688">
    <property type="entry name" value="Leu_Phe_trans"/>
    <property type="match status" value="1"/>
</dbReference>
<dbReference type="InterPro" id="IPR016181">
    <property type="entry name" value="Acyl_CoA_acyltransferase"/>
</dbReference>
<dbReference type="InterPro" id="IPR004616">
    <property type="entry name" value="Leu/Phe-tRNA_Trfase"/>
</dbReference>
<dbReference type="InterPro" id="IPR042203">
    <property type="entry name" value="Leu/Phe-tRNA_Trfase_C"/>
</dbReference>
<dbReference type="NCBIfam" id="TIGR00667">
    <property type="entry name" value="aat"/>
    <property type="match status" value="1"/>
</dbReference>
<dbReference type="PANTHER" id="PTHR30098">
    <property type="entry name" value="LEUCYL/PHENYLALANYL-TRNA--PROTEIN TRANSFERASE"/>
    <property type="match status" value="1"/>
</dbReference>
<dbReference type="PANTHER" id="PTHR30098:SF2">
    <property type="entry name" value="LEUCYL_PHENYLALANYL-TRNA--PROTEIN TRANSFERASE"/>
    <property type="match status" value="1"/>
</dbReference>
<dbReference type="Pfam" id="PF03588">
    <property type="entry name" value="Leu_Phe_trans"/>
    <property type="match status" value="1"/>
</dbReference>
<dbReference type="SUPFAM" id="SSF55729">
    <property type="entry name" value="Acyl-CoA N-acyltransferases (Nat)"/>
    <property type="match status" value="1"/>
</dbReference>